<dbReference type="EC" id="2.7.1.6" evidence="1"/>
<dbReference type="EMBL" id="AP008934">
    <property type="protein sequence ID" value="BAE17774.1"/>
    <property type="molecule type" value="Genomic_DNA"/>
</dbReference>
<dbReference type="RefSeq" id="WP_011302569.1">
    <property type="nucleotide sequence ID" value="NZ_MTGA01000036.1"/>
</dbReference>
<dbReference type="SMR" id="Q49ZK2"/>
<dbReference type="GeneID" id="3616025"/>
<dbReference type="KEGG" id="ssp:SSP0629"/>
<dbReference type="eggNOG" id="COG0153">
    <property type="taxonomic scope" value="Bacteria"/>
</dbReference>
<dbReference type="HOGENOM" id="CLU_017814_2_1_9"/>
<dbReference type="OrthoDB" id="250531at2"/>
<dbReference type="UniPathway" id="UPA00214"/>
<dbReference type="Proteomes" id="UP000006371">
    <property type="component" value="Chromosome"/>
</dbReference>
<dbReference type="GO" id="GO:0005829">
    <property type="term" value="C:cytosol"/>
    <property type="evidence" value="ECO:0007669"/>
    <property type="project" value="TreeGrafter"/>
</dbReference>
<dbReference type="GO" id="GO:0005524">
    <property type="term" value="F:ATP binding"/>
    <property type="evidence" value="ECO:0007669"/>
    <property type="project" value="UniProtKB-UniRule"/>
</dbReference>
<dbReference type="GO" id="GO:0004335">
    <property type="term" value="F:galactokinase activity"/>
    <property type="evidence" value="ECO:0007669"/>
    <property type="project" value="UniProtKB-UniRule"/>
</dbReference>
<dbReference type="GO" id="GO:0000287">
    <property type="term" value="F:magnesium ion binding"/>
    <property type="evidence" value="ECO:0007669"/>
    <property type="project" value="UniProtKB-UniRule"/>
</dbReference>
<dbReference type="GO" id="GO:0006012">
    <property type="term" value="P:galactose metabolic process"/>
    <property type="evidence" value="ECO:0007669"/>
    <property type="project" value="UniProtKB-UniRule"/>
</dbReference>
<dbReference type="FunFam" id="3.30.230.10:FF:000017">
    <property type="entry name" value="Galactokinase"/>
    <property type="match status" value="1"/>
</dbReference>
<dbReference type="FunFam" id="3.30.70.890:FF:000001">
    <property type="entry name" value="Galactokinase"/>
    <property type="match status" value="1"/>
</dbReference>
<dbReference type="Gene3D" id="3.30.230.10">
    <property type="match status" value="1"/>
</dbReference>
<dbReference type="Gene3D" id="3.30.70.890">
    <property type="entry name" value="GHMP kinase, C-terminal domain"/>
    <property type="match status" value="1"/>
</dbReference>
<dbReference type="HAMAP" id="MF_00246">
    <property type="entry name" value="Galactokinase"/>
    <property type="match status" value="1"/>
</dbReference>
<dbReference type="InterPro" id="IPR000705">
    <property type="entry name" value="Galactokinase"/>
</dbReference>
<dbReference type="InterPro" id="IPR022963">
    <property type="entry name" value="Galactokinase_bac"/>
</dbReference>
<dbReference type="InterPro" id="IPR019741">
    <property type="entry name" value="Galactokinase_CS"/>
</dbReference>
<dbReference type="InterPro" id="IPR019539">
    <property type="entry name" value="GalKase_N"/>
</dbReference>
<dbReference type="InterPro" id="IPR013750">
    <property type="entry name" value="GHMP_kinase_C_dom"/>
</dbReference>
<dbReference type="InterPro" id="IPR036554">
    <property type="entry name" value="GHMP_kinase_C_sf"/>
</dbReference>
<dbReference type="InterPro" id="IPR006204">
    <property type="entry name" value="GHMP_kinase_N_dom"/>
</dbReference>
<dbReference type="InterPro" id="IPR006206">
    <property type="entry name" value="Mevalonate/galactokinase"/>
</dbReference>
<dbReference type="InterPro" id="IPR020568">
    <property type="entry name" value="Ribosomal_Su5_D2-typ_SF"/>
</dbReference>
<dbReference type="InterPro" id="IPR014721">
    <property type="entry name" value="Ribsml_uS5_D2-typ_fold_subgr"/>
</dbReference>
<dbReference type="NCBIfam" id="TIGR00131">
    <property type="entry name" value="gal_kin"/>
    <property type="match status" value="1"/>
</dbReference>
<dbReference type="NCBIfam" id="NF003705">
    <property type="entry name" value="PRK05322.1"/>
    <property type="match status" value="1"/>
</dbReference>
<dbReference type="PANTHER" id="PTHR10457:SF7">
    <property type="entry name" value="GALACTOKINASE-RELATED"/>
    <property type="match status" value="1"/>
</dbReference>
<dbReference type="PANTHER" id="PTHR10457">
    <property type="entry name" value="MEVALONATE KINASE/GALACTOKINASE"/>
    <property type="match status" value="1"/>
</dbReference>
<dbReference type="Pfam" id="PF10509">
    <property type="entry name" value="GalKase_gal_bdg"/>
    <property type="match status" value="1"/>
</dbReference>
<dbReference type="Pfam" id="PF08544">
    <property type="entry name" value="GHMP_kinases_C"/>
    <property type="match status" value="1"/>
</dbReference>
<dbReference type="Pfam" id="PF00288">
    <property type="entry name" value="GHMP_kinases_N"/>
    <property type="match status" value="1"/>
</dbReference>
<dbReference type="PIRSF" id="PIRSF000530">
    <property type="entry name" value="Galactokinase"/>
    <property type="match status" value="1"/>
</dbReference>
<dbReference type="PRINTS" id="PR00473">
    <property type="entry name" value="GALCTOKINASE"/>
</dbReference>
<dbReference type="PRINTS" id="PR00959">
    <property type="entry name" value="MEVGALKINASE"/>
</dbReference>
<dbReference type="SUPFAM" id="SSF55060">
    <property type="entry name" value="GHMP Kinase, C-terminal domain"/>
    <property type="match status" value="1"/>
</dbReference>
<dbReference type="SUPFAM" id="SSF54211">
    <property type="entry name" value="Ribosomal protein S5 domain 2-like"/>
    <property type="match status" value="1"/>
</dbReference>
<dbReference type="PROSITE" id="PS00106">
    <property type="entry name" value="GALACTOKINASE"/>
    <property type="match status" value="1"/>
</dbReference>
<evidence type="ECO:0000255" key="1">
    <source>
        <dbReference type="HAMAP-Rule" id="MF_00246"/>
    </source>
</evidence>
<name>GAL1_STAS1</name>
<feature type="chain" id="PRO_1000005765" description="Galactokinase">
    <location>
        <begin position="1"/>
        <end position="386"/>
    </location>
</feature>
<feature type="active site" description="Proton acceptor" evidence="1">
    <location>
        <position position="173"/>
    </location>
</feature>
<feature type="binding site" evidence="1">
    <location>
        <begin position="32"/>
        <end position="35"/>
    </location>
    <ligand>
        <name>substrate</name>
    </ligand>
</feature>
<feature type="binding site" evidence="1">
    <location>
        <position position="66"/>
    </location>
    <ligand>
        <name>ATP</name>
        <dbReference type="ChEBI" id="CHEBI:30616"/>
    </ligand>
</feature>
<feature type="binding site" evidence="1">
    <location>
        <begin position="123"/>
        <end position="129"/>
    </location>
    <ligand>
        <name>ATP</name>
        <dbReference type="ChEBI" id="CHEBI:30616"/>
    </ligand>
</feature>
<feature type="binding site" evidence="1">
    <location>
        <position position="129"/>
    </location>
    <ligand>
        <name>Mg(2+)</name>
        <dbReference type="ChEBI" id="CHEBI:18420"/>
    </ligand>
</feature>
<feature type="binding site" evidence="1">
    <location>
        <position position="161"/>
    </location>
    <ligand>
        <name>Mg(2+)</name>
        <dbReference type="ChEBI" id="CHEBI:18420"/>
    </ligand>
</feature>
<feature type="binding site" evidence="1">
    <location>
        <position position="223"/>
    </location>
    <ligand>
        <name>substrate</name>
    </ligand>
</feature>
<feature type="site" description="Transition state stabilizer" evidence="1">
    <location>
        <position position="26"/>
    </location>
</feature>
<keyword id="KW-0067">ATP-binding</keyword>
<keyword id="KW-0119">Carbohydrate metabolism</keyword>
<keyword id="KW-0963">Cytoplasm</keyword>
<keyword id="KW-0299">Galactose metabolism</keyword>
<keyword id="KW-0418">Kinase</keyword>
<keyword id="KW-0460">Magnesium</keyword>
<keyword id="KW-0479">Metal-binding</keyword>
<keyword id="KW-0547">Nucleotide-binding</keyword>
<keyword id="KW-1185">Reference proteome</keyword>
<keyword id="KW-0808">Transferase</keyword>
<proteinExistence type="inferred from homology"/>
<gene>
    <name evidence="1" type="primary">galK</name>
    <name type="ordered locus">SSP0629</name>
</gene>
<accession>Q49ZK2</accession>
<organism>
    <name type="scientific">Staphylococcus saprophyticus subsp. saprophyticus (strain ATCC 15305 / DSM 20229 / NCIMB 8711 / NCTC 7292 / S-41)</name>
    <dbReference type="NCBI Taxonomy" id="342451"/>
    <lineage>
        <taxon>Bacteria</taxon>
        <taxon>Bacillati</taxon>
        <taxon>Bacillota</taxon>
        <taxon>Bacilli</taxon>
        <taxon>Bacillales</taxon>
        <taxon>Staphylococcaceae</taxon>
        <taxon>Staphylococcus</taxon>
    </lineage>
</organism>
<reference key="1">
    <citation type="journal article" date="2005" name="Proc. Natl. Acad. Sci. U.S.A.">
        <title>Whole genome sequence of Staphylococcus saprophyticus reveals the pathogenesis of uncomplicated urinary tract infection.</title>
        <authorList>
            <person name="Kuroda M."/>
            <person name="Yamashita A."/>
            <person name="Hirakawa H."/>
            <person name="Kumano M."/>
            <person name="Morikawa K."/>
            <person name="Higashide M."/>
            <person name="Maruyama A."/>
            <person name="Inose Y."/>
            <person name="Matoba K."/>
            <person name="Toh H."/>
            <person name="Kuhara S."/>
            <person name="Hattori M."/>
            <person name="Ohta T."/>
        </authorList>
    </citation>
    <scope>NUCLEOTIDE SEQUENCE [LARGE SCALE GENOMIC DNA]</scope>
    <source>
        <strain>ATCC 15305 / DSM 20229 / NCIMB 8711 / NCTC 7292 / S-41</strain>
    </source>
</reference>
<sequence>MLQEMHKKFESLFDVKADVRAFAPGRINLIGEHTDYNGGYVFPAAIELGTYGLASKRTDRIIQLYSNNFEDTGIVSFTLDELEFNEQHDWANYPKGVVKYLKEEFNDINQGFNILVEGNIPNGASLSSSASIELLTGWLIKQLFNLHLERLQLIKLGQVVENKFMGVNSGIMDQFIIGMGKAEHAILLDTATLDFDYVPAKFGDYVISIMNTNKRRSLTESKYNERRSECENALSQLQQQLEITSLGELSLAQFEKYQSLITDEVVCRRAKHAISENERTKLAHKALADNNFEQFGQLLNASHKSLKEDYEVTGIELDTLAETAQQVEGVLGARMTGAGFAGCAIALVDKNSIQKLEDEVSKAYIDKIGYAPSFYHVGISDGVKAL</sequence>
<protein>
    <recommendedName>
        <fullName evidence="1">Galactokinase</fullName>
        <ecNumber evidence="1">2.7.1.6</ecNumber>
    </recommendedName>
    <alternativeName>
        <fullName evidence="1">Galactose kinase</fullName>
    </alternativeName>
</protein>
<comment type="function">
    <text evidence="1">Catalyzes the transfer of the gamma-phosphate of ATP to D-galactose to form alpha-D-galactose-1-phosphate (Gal-1-P).</text>
</comment>
<comment type="catalytic activity">
    <reaction evidence="1">
        <text>alpha-D-galactose + ATP = alpha-D-galactose 1-phosphate + ADP + H(+)</text>
        <dbReference type="Rhea" id="RHEA:13553"/>
        <dbReference type="ChEBI" id="CHEBI:15378"/>
        <dbReference type="ChEBI" id="CHEBI:28061"/>
        <dbReference type="ChEBI" id="CHEBI:30616"/>
        <dbReference type="ChEBI" id="CHEBI:58336"/>
        <dbReference type="ChEBI" id="CHEBI:456216"/>
        <dbReference type="EC" id="2.7.1.6"/>
    </reaction>
</comment>
<comment type="pathway">
    <text evidence="1">Carbohydrate metabolism; galactose metabolism.</text>
</comment>
<comment type="subcellular location">
    <subcellularLocation>
        <location evidence="1">Cytoplasm</location>
    </subcellularLocation>
</comment>
<comment type="similarity">
    <text evidence="1">Belongs to the GHMP kinase family. GalK subfamily.</text>
</comment>